<keyword id="KW-1185">Reference proteome</keyword>
<keyword id="KW-0687">Ribonucleoprotein</keyword>
<keyword id="KW-0689">Ribosomal protein</keyword>
<keyword id="KW-0694">RNA-binding</keyword>
<keyword id="KW-0699">rRNA-binding</keyword>
<comment type="function">
    <text evidence="1">This is one of the proteins that binds to the 5S RNA in the ribosome where it forms part of the central protuberance.</text>
</comment>
<comment type="subunit">
    <text evidence="1">Part of the 50S ribosomal subunit; part of the 5S rRNA/L5/L18/L25 subcomplex. Contacts the 5S rRNA. Binds to the 5S rRNA independently of L5 and L18.</text>
</comment>
<comment type="similarity">
    <text evidence="1">Belongs to the bacterial ribosomal protein bL25 family.</text>
</comment>
<proteinExistence type="inferred from homology"/>
<accession>Q9CN10</accession>
<name>RL25_PASMU</name>
<evidence type="ECO:0000255" key="1">
    <source>
        <dbReference type="HAMAP-Rule" id="MF_01336"/>
    </source>
</evidence>
<evidence type="ECO:0000256" key="2">
    <source>
        <dbReference type="SAM" id="MobiDB-lite"/>
    </source>
</evidence>
<evidence type="ECO:0000305" key="3"/>
<sequence>MFKFNAEVRQSQGKGASRRLRHNGQIPAIVYGGSEAPVSIVLNHDDLNNAQVHDAFYTDVITLVIEGKEVAVKAQAMQRHPFKPKLVHIDFKRV</sequence>
<gene>
    <name evidence="1" type="primary">rplY</name>
    <name type="ordered locus">PM0639</name>
</gene>
<protein>
    <recommendedName>
        <fullName evidence="1">Large ribosomal subunit protein bL25</fullName>
    </recommendedName>
    <alternativeName>
        <fullName evidence="3">50S ribosomal protein L25</fullName>
    </alternativeName>
</protein>
<organism>
    <name type="scientific">Pasteurella multocida (strain Pm70)</name>
    <dbReference type="NCBI Taxonomy" id="272843"/>
    <lineage>
        <taxon>Bacteria</taxon>
        <taxon>Pseudomonadati</taxon>
        <taxon>Pseudomonadota</taxon>
        <taxon>Gammaproteobacteria</taxon>
        <taxon>Pasteurellales</taxon>
        <taxon>Pasteurellaceae</taxon>
        <taxon>Pasteurella</taxon>
    </lineage>
</organism>
<feature type="chain" id="PRO_0000181486" description="Large ribosomal subunit protein bL25">
    <location>
        <begin position="1"/>
        <end position="94"/>
    </location>
</feature>
<feature type="region of interest" description="Disordered" evidence="2">
    <location>
        <begin position="1"/>
        <end position="20"/>
    </location>
</feature>
<reference key="1">
    <citation type="journal article" date="2001" name="Proc. Natl. Acad. Sci. U.S.A.">
        <title>Complete genomic sequence of Pasteurella multocida Pm70.</title>
        <authorList>
            <person name="May B.J."/>
            <person name="Zhang Q."/>
            <person name="Li L.L."/>
            <person name="Paustian M.L."/>
            <person name="Whittam T.S."/>
            <person name="Kapur V."/>
        </authorList>
    </citation>
    <scope>NUCLEOTIDE SEQUENCE [LARGE SCALE GENOMIC DNA]</scope>
    <source>
        <strain>Pm70</strain>
    </source>
</reference>
<dbReference type="EMBL" id="AE004439">
    <property type="protein sequence ID" value="AAK02723.1"/>
    <property type="molecule type" value="Genomic_DNA"/>
</dbReference>
<dbReference type="RefSeq" id="WP_005716009.1">
    <property type="nucleotide sequence ID" value="NC_002663.1"/>
</dbReference>
<dbReference type="SMR" id="Q9CN10"/>
<dbReference type="STRING" id="272843.PM0639"/>
<dbReference type="EnsemblBacteria" id="AAK02723">
    <property type="protein sequence ID" value="AAK02723"/>
    <property type="gene ID" value="PM0639"/>
</dbReference>
<dbReference type="GeneID" id="77207937"/>
<dbReference type="KEGG" id="pmu:PM0639"/>
<dbReference type="HOGENOM" id="CLU_137946_0_0_6"/>
<dbReference type="OrthoDB" id="9806411at2"/>
<dbReference type="Proteomes" id="UP000000809">
    <property type="component" value="Chromosome"/>
</dbReference>
<dbReference type="GO" id="GO:0022625">
    <property type="term" value="C:cytosolic large ribosomal subunit"/>
    <property type="evidence" value="ECO:0007669"/>
    <property type="project" value="TreeGrafter"/>
</dbReference>
<dbReference type="GO" id="GO:0008097">
    <property type="term" value="F:5S rRNA binding"/>
    <property type="evidence" value="ECO:0007669"/>
    <property type="project" value="InterPro"/>
</dbReference>
<dbReference type="GO" id="GO:0003735">
    <property type="term" value="F:structural constituent of ribosome"/>
    <property type="evidence" value="ECO:0007669"/>
    <property type="project" value="InterPro"/>
</dbReference>
<dbReference type="GO" id="GO:0006412">
    <property type="term" value="P:translation"/>
    <property type="evidence" value="ECO:0007669"/>
    <property type="project" value="UniProtKB-UniRule"/>
</dbReference>
<dbReference type="CDD" id="cd00495">
    <property type="entry name" value="Ribosomal_L25_TL5_CTC"/>
    <property type="match status" value="1"/>
</dbReference>
<dbReference type="FunFam" id="2.40.240.10:FF:000002">
    <property type="entry name" value="50S ribosomal protein L25"/>
    <property type="match status" value="1"/>
</dbReference>
<dbReference type="Gene3D" id="2.40.240.10">
    <property type="entry name" value="Ribosomal Protein L25, Chain P"/>
    <property type="match status" value="1"/>
</dbReference>
<dbReference type="HAMAP" id="MF_01336">
    <property type="entry name" value="Ribosomal_bL25"/>
    <property type="match status" value="1"/>
</dbReference>
<dbReference type="InterPro" id="IPR020056">
    <property type="entry name" value="Rbsml_bL25/Gln-tRNA_synth_N"/>
</dbReference>
<dbReference type="InterPro" id="IPR011035">
    <property type="entry name" value="Ribosomal_bL25/Gln-tRNA_synth"/>
</dbReference>
<dbReference type="InterPro" id="IPR020055">
    <property type="entry name" value="Ribosomal_bL25_short"/>
</dbReference>
<dbReference type="InterPro" id="IPR029751">
    <property type="entry name" value="Ribosomal_L25_dom"/>
</dbReference>
<dbReference type="InterPro" id="IPR020930">
    <property type="entry name" value="Ribosomal_uL5_bac-type"/>
</dbReference>
<dbReference type="NCBIfam" id="NF004612">
    <property type="entry name" value="PRK05943.1"/>
    <property type="match status" value="1"/>
</dbReference>
<dbReference type="PANTHER" id="PTHR33284">
    <property type="entry name" value="RIBOSOMAL PROTEIN L25/GLN-TRNA SYNTHETASE, ANTI-CODON-BINDING DOMAIN-CONTAINING PROTEIN"/>
    <property type="match status" value="1"/>
</dbReference>
<dbReference type="PANTHER" id="PTHR33284:SF1">
    <property type="entry name" value="RIBOSOMAL PROTEIN L25_GLN-TRNA SYNTHETASE, ANTI-CODON-BINDING DOMAIN-CONTAINING PROTEIN"/>
    <property type="match status" value="1"/>
</dbReference>
<dbReference type="Pfam" id="PF01386">
    <property type="entry name" value="Ribosomal_L25p"/>
    <property type="match status" value="1"/>
</dbReference>
<dbReference type="SUPFAM" id="SSF50715">
    <property type="entry name" value="Ribosomal protein L25-like"/>
    <property type="match status" value="1"/>
</dbReference>